<gene>
    <name evidence="1" type="primary">rnc</name>
    <name type="ordered locus">SAV1233</name>
</gene>
<reference key="1">
    <citation type="journal article" date="2001" name="Lancet">
        <title>Whole genome sequencing of meticillin-resistant Staphylococcus aureus.</title>
        <authorList>
            <person name="Kuroda M."/>
            <person name="Ohta T."/>
            <person name="Uchiyama I."/>
            <person name="Baba T."/>
            <person name="Yuzawa H."/>
            <person name="Kobayashi I."/>
            <person name="Cui L."/>
            <person name="Oguchi A."/>
            <person name="Aoki K."/>
            <person name="Nagai Y."/>
            <person name="Lian J.-Q."/>
            <person name="Ito T."/>
            <person name="Kanamori M."/>
            <person name="Matsumaru H."/>
            <person name="Maruyama A."/>
            <person name="Murakami H."/>
            <person name="Hosoyama A."/>
            <person name="Mizutani-Ui Y."/>
            <person name="Takahashi N.K."/>
            <person name="Sawano T."/>
            <person name="Inoue R."/>
            <person name="Kaito C."/>
            <person name="Sekimizu K."/>
            <person name="Hirakawa H."/>
            <person name="Kuhara S."/>
            <person name="Goto S."/>
            <person name="Yabuzaki J."/>
            <person name="Kanehisa M."/>
            <person name="Yamashita A."/>
            <person name="Oshima K."/>
            <person name="Furuya K."/>
            <person name="Yoshino C."/>
            <person name="Shiba T."/>
            <person name="Hattori M."/>
            <person name="Ogasawara N."/>
            <person name="Hayashi H."/>
            <person name="Hiramatsu K."/>
        </authorList>
    </citation>
    <scope>NUCLEOTIDE SEQUENCE [LARGE SCALE GENOMIC DNA]</scope>
    <source>
        <strain>Mu50 / ATCC 700699</strain>
    </source>
</reference>
<name>RNC_STAAM</name>
<evidence type="ECO:0000255" key="1">
    <source>
        <dbReference type="HAMAP-Rule" id="MF_00104"/>
    </source>
</evidence>
<evidence type="ECO:0000256" key="2">
    <source>
        <dbReference type="SAM" id="MobiDB-lite"/>
    </source>
</evidence>
<protein>
    <recommendedName>
        <fullName evidence="1">Ribonuclease 3</fullName>
        <ecNumber evidence="1">3.1.26.3</ecNumber>
    </recommendedName>
    <alternativeName>
        <fullName evidence="1">Ribonuclease III</fullName>
        <shortName evidence="1">RNase III</shortName>
    </alternativeName>
</protein>
<comment type="function">
    <text evidence="1">Digests double-stranded RNA. Involved in the processing of primary rRNA transcript to yield the immediate precursors to the large and small rRNAs (23S and 16S). Processes some mRNAs, and tRNAs when they are encoded in the rRNA operon. Processes pre-crRNA and tracrRNA of type II CRISPR loci if present in the organism.</text>
</comment>
<comment type="catalytic activity">
    <reaction evidence="1">
        <text>Endonucleolytic cleavage to 5'-phosphomonoester.</text>
        <dbReference type="EC" id="3.1.26.3"/>
    </reaction>
</comment>
<comment type="cofactor">
    <cofactor evidence="1">
        <name>Mg(2+)</name>
        <dbReference type="ChEBI" id="CHEBI:18420"/>
    </cofactor>
</comment>
<comment type="subunit">
    <text evidence="1">Homodimer.</text>
</comment>
<comment type="subcellular location">
    <subcellularLocation>
        <location evidence="1">Cytoplasm</location>
    </subcellularLocation>
</comment>
<comment type="similarity">
    <text evidence="1">Belongs to the ribonuclease III family.</text>
</comment>
<feature type="chain" id="PRO_0000180433" description="Ribonuclease 3">
    <location>
        <begin position="1"/>
        <end position="243"/>
    </location>
</feature>
<feature type="domain" description="RNase III" evidence="1">
    <location>
        <begin position="10"/>
        <end position="146"/>
    </location>
</feature>
<feature type="domain" description="DRBM" evidence="1">
    <location>
        <begin position="172"/>
        <end position="241"/>
    </location>
</feature>
<feature type="region of interest" description="Disordered" evidence="2">
    <location>
        <begin position="219"/>
        <end position="243"/>
    </location>
</feature>
<feature type="compositionally biased region" description="Basic and acidic residues" evidence="2">
    <location>
        <begin position="219"/>
        <end position="231"/>
    </location>
</feature>
<feature type="active site" evidence="1">
    <location>
        <position position="63"/>
    </location>
</feature>
<feature type="active site" evidence="1">
    <location>
        <position position="135"/>
    </location>
</feature>
<feature type="binding site" evidence="1">
    <location>
        <position position="59"/>
    </location>
    <ligand>
        <name>Mg(2+)</name>
        <dbReference type="ChEBI" id="CHEBI:18420"/>
    </ligand>
</feature>
<feature type="binding site" evidence="1">
    <location>
        <position position="132"/>
    </location>
    <ligand>
        <name>Mg(2+)</name>
        <dbReference type="ChEBI" id="CHEBI:18420"/>
    </ligand>
</feature>
<feature type="binding site" evidence="1">
    <location>
        <position position="135"/>
    </location>
    <ligand>
        <name>Mg(2+)</name>
        <dbReference type="ChEBI" id="CHEBI:18420"/>
    </ligand>
</feature>
<proteinExistence type="inferred from homology"/>
<keyword id="KW-0963">Cytoplasm</keyword>
<keyword id="KW-0255">Endonuclease</keyword>
<keyword id="KW-0378">Hydrolase</keyword>
<keyword id="KW-0460">Magnesium</keyword>
<keyword id="KW-0479">Metal-binding</keyword>
<keyword id="KW-0507">mRNA processing</keyword>
<keyword id="KW-0540">Nuclease</keyword>
<keyword id="KW-0694">RNA-binding</keyword>
<keyword id="KW-0698">rRNA processing</keyword>
<keyword id="KW-0699">rRNA-binding</keyword>
<keyword id="KW-0819">tRNA processing</keyword>
<organism>
    <name type="scientific">Staphylococcus aureus (strain Mu50 / ATCC 700699)</name>
    <dbReference type="NCBI Taxonomy" id="158878"/>
    <lineage>
        <taxon>Bacteria</taxon>
        <taxon>Bacillati</taxon>
        <taxon>Bacillota</taxon>
        <taxon>Bacilli</taxon>
        <taxon>Bacillales</taxon>
        <taxon>Staphylococcaceae</taxon>
        <taxon>Staphylococcus</taxon>
    </lineage>
</organism>
<dbReference type="EC" id="3.1.26.3" evidence="1"/>
<dbReference type="EMBL" id="BA000017">
    <property type="protein sequence ID" value="BAB57395.1"/>
    <property type="molecule type" value="Genomic_DNA"/>
</dbReference>
<dbReference type="RefSeq" id="WP_000043238.1">
    <property type="nucleotide sequence ID" value="NC_002758.2"/>
</dbReference>
<dbReference type="SMR" id="Q931T1"/>
<dbReference type="KEGG" id="sav:SAV1233"/>
<dbReference type="HOGENOM" id="CLU_000907_1_3_9"/>
<dbReference type="PhylomeDB" id="Q931T1"/>
<dbReference type="Proteomes" id="UP000002481">
    <property type="component" value="Chromosome"/>
</dbReference>
<dbReference type="GO" id="GO:0005737">
    <property type="term" value="C:cytoplasm"/>
    <property type="evidence" value="ECO:0007669"/>
    <property type="project" value="UniProtKB-SubCell"/>
</dbReference>
<dbReference type="GO" id="GO:0003725">
    <property type="term" value="F:double-stranded RNA binding"/>
    <property type="evidence" value="ECO:0007669"/>
    <property type="project" value="TreeGrafter"/>
</dbReference>
<dbReference type="GO" id="GO:0046872">
    <property type="term" value="F:metal ion binding"/>
    <property type="evidence" value="ECO:0007669"/>
    <property type="project" value="UniProtKB-KW"/>
</dbReference>
<dbReference type="GO" id="GO:0004525">
    <property type="term" value="F:ribonuclease III activity"/>
    <property type="evidence" value="ECO:0007669"/>
    <property type="project" value="UniProtKB-UniRule"/>
</dbReference>
<dbReference type="GO" id="GO:0019843">
    <property type="term" value="F:rRNA binding"/>
    <property type="evidence" value="ECO:0007669"/>
    <property type="project" value="UniProtKB-KW"/>
</dbReference>
<dbReference type="GO" id="GO:0006397">
    <property type="term" value="P:mRNA processing"/>
    <property type="evidence" value="ECO:0007669"/>
    <property type="project" value="UniProtKB-UniRule"/>
</dbReference>
<dbReference type="GO" id="GO:0010468">
    <property type="term" value="P:regulation of gene expression"/>
    <property type="evidence" value="ECO:0007669"/>
    <property type="project" value="TreeGrafter"/>
</dbReference>
<dbReference type="GO" id="GO:0006364">
    <property type="term" value="P:rRNA processing"/>
    <property type="evidence" value="ECO:0007669"/>
    <property type="project" value="UniProtKB-UniRule"/>
</dbReference>
<dbReference type="GO" id="GO:0008033">
    <property type="term" value="P:tRNA processing"/>
    <property type="evidence" value="ECO:0007669"/>
    <property type="project" value="UniProtKB-KW"/>
</dbReference>
<dbReference type="CDD" id="cd10845">
    <property type="entry name" value="DSRM_RNAse_III_family"/>
    <property type="match status" value="1"/>
</dbReference>
<dbReference type="CDD" id="cd00593">
    <property type="entry name" value="RIBOc"/>
    <property type="match status" value="1"/>
</dbReference>
<dbReference type="FunFam" id="1.10.1520.10:FF:000001">
    <property type="entry name" value="Ribonuclease 3"/>
    <property type="match status" value="1"/>
</dbReference>
<dbReference type="FunFam" id="3.30.160.20:FF:000003">
    <property type="entry name" value="Ribonuclease 3"/>
    <property type="match status" value="1"/>
</dbReference>
<dbReference type="Gene3D" id="3.30.160.20">
    <property type="match status" value="1"/>
</dbReference>
<dbReference type="Gene3D" id="1.10.1520.10">
    <property type="entry name" value="Ribonuclease III domain"/>
    <property type="match status" value="1"/>
</dbReference>
<dbReference type="HAMAP" id="MF_00104">
    <property type="entry name" value="RNase_III"/>
    <property type="match status" value="1"/>
</dbReference>
<dbReference type="InterPro" id="IPR014720">
    <property type="entry name" value="dsRBD_dom"/>
</dbReference>
<dbReference type="InterPro" id="IPR011907">
    <property type="entry name" value="RNase_III"/>
</dbReference>
<dbReference type="InterPro" id="IPR000999">
    <property type="entry name" value="RNase_III_dom"/>
</dbReference>
<dbReference type="InterPro" id="IPR036389">
    <property type="entry name" value="RNase_III_sf"/>
</dbReference>
<dbReference type="NCBIfam" id="TIGR02191">
    <property type="entry name" value="RNaseIII"/>
    <property type="match status" value="1"/>
</dbReference>
<dbReference type="PANTHER" id="PTHR11207:SF0">
    <property type="entry name" value="RIBONUCLEASE 3"/>
    <property type="match status" value="1"/>
</dbReference>
<dbReference type="PANTHER" id="PTHR11207">
    <property type="entry name" value="RIBONUCLEASE III"/>
    <property type="match status" value="1"/>
</dbReference>
<dbReference type="Pfam" id="PF00035">
    <property type="entry name" value="dsrm"/>
    <property type="match status" value="1"/>
</dbReference>
<dbReference type="Pfam" id="PF14622">
    <property type="entry name" value="Ribonucleas_3_3"/>
    <property type="match status" value="1"/>
</dbReference>
<dbReference type="SMART" id="SM00358">
    <property type="entry name" value="DSRM"/>
    <property type="match status" value="1"/>
</dbReference>
<dbReference type="SMART" id="SM00535">
    <property type="entry name" value="RIBOc"/>
    <property type="match status" value="1"/>
</dbReference>
<dbReference type="SUPFAM" id="SSF54768">
    <property type="entry name" value="dsRNA-binding domain-like"/>
    <property type="match status" value="1"/>
</dbReference>
<dbReference type="SUPFAM" id="SSF69065">
    <property type="entry name" value="RNase III domain-like"/>
    <property type="match status" value="1"/>
</dbReference>
<dbReference type="PROSITE" id="PS50137">
    <property type="entry name" value="DS_RBD"/>
    <property type="match status" value="1"/>
</dbReference>
<dbReference type="PROSITE" id="PS00517">
    <property type="entry name" value="RNASE_3_1"/>
    <property type="match status" value="1"/>
</dbReference>
<dbReference type="PROSITE" id="PS50142">
    <property type="entry name" value="RNASE_3_2"/>
    <property type="match status" value="1"/>
</dbReference>
<sequence>MSKQKKSEIVNRFRKRFDTKMTELGFTYQNIDLYQQAFSHSSFINDFNMNRLDHNERLEFLGDAVLELTVSRYLFDKHPNLPEGNLTKMRATIVCEPSLVIFANKIGLNEMILLGKGEEKTGGRTRPSLISDAFEAFIGALYLDQGLDIVWKFAEKVIFPHVEQNELLGVVDFKTQFQEYVHQQNKGDVTYNLIKEEGPAHHRLFTSEVILQGEAIAEGKGKTKKESEQRAAKSAYKQLKQIK</sequence>
<accession>Q931T1</accession>